<dbReference type="EC" id="2.7.7.2" evidence="1"/>
<dbReference type="EMBL" id="CP000562">
    <property type="protein sequence ID" value="ABN58219.1"/>
    <property type="molecule type" value="Genomic_DNA"/>
</dbReference>
<dbReference type="RefSeq" id="WP_011845128.1">
    <property type="nucleotide sequence ID" value="NC_009051.1"/>
</dbReference>
<dbReference type="SMR" id="A3CXW9"/>
<dbReference type="STRING" id="368407.Memar_2296"/>
<dbReference type="GeneID" id="4847989"/>
<dbReference type="KEGG" id="mem:Memar_2296"/>
<dbReference type="eggNOG" id="arCOG01222">
    <property type="taxonomic scope" value="Archaea"/>
</dbReference>
<dbReference type="HOGENOM" id="CLU_034585_2_1_2"/>
<dbReference type="OrthoDB" id="1912at2157"/>
<dbReference type="UniPathway" id="UPA00277">
    <property type="reaction ID" value="UER00407"/>
</dbReference>
<dbReference type="Proteomes" id="UP000002146">
    <property type="component" value="Chromosome"/>
</dbReference>
<dbReference type="GO" id="GO:0005524">
    <property type="term" value="F:ATP binding"/>
    <property type="evidence" value="ECO:0007669"/>
    <property type="project" value="UniProtKB-UniRule"/>
</dbReference>
<dbReference type="GO" id="GO:0003919">
    <property type="term" value="F:FMN adenylyltransferase activity"/>
    <property type="evidence" value="ECO:0007669"/>
    <property type="project" value="UniProtKB-UniRule"/>
</dbReference>
<dbReference type="GO" id="GO:0006747">
    <property type="term" value="P:FAD biosynthetic process"/>
    <property type="evidence" value="ECO:0007669"/>
    <property type="project" value="UniProtKB-UniRule"/>
</dbReference>
<dbReference type="GO" id="GO:0046444">
    <property type="term" value="P:FMN metabolic process"/>
    <property type="evidence" value="ECO:0007669"/>
    <property type="project" value="UniProtKB-UniRule"/>
</dbReference>
<dbReference type="CDD" id="cd02170">
    <property type="entry name" value="cytidylyltransferase"/>
    <property type="match status" value="1"/>
</dbReference>
<dbReference type="Gene3D" id="3.40.50.620">
    <property type="entry name" value="HUPs"/>
    <property type="match status" value="1"/>
</dbReference>
<dbReference type="HAMAP" id="MF_02115">
    <property type="entry name" value="FAD_synth_arch"/>
    <property type="match status" value="1"/>
</dbReference>
<dbReference type="InterPro" id="IPR050385">
    <property type="entry name" value="Archaeal_FAD_synthase"/>
</dbReference>
<dbReference type="InterPro" id="IPR004821">
    <property type="entry name" value="Cyt_trans-like"/>
</dbReference>
<dbReference type="InterPro" id="IPR024902">
    <property type="entry name" value="FAD_synth_RibL"/>
</dbReference>
<dbReference type="InterPro" id="IPR014729">
    <property type="entry name" value="Rossmann-like_a/b/a_fold"/>
</dbReference>
<dbReference type="NCBIfam" id="TIGR00125">
    <property type="entry name" value="cyt_tran_rel"/>
    <property type="match status" value="1"/>
</dbReference>
<dbReference type="PANTHER" id="PTHR43793">
    <property type="entry name" value="FAD SYNTHASE"/>
    <property type="match status" value="1"/>
</dbReference>
<dbReference type="PANTHER" id="PTHR43793:SF1">
    <property type="entry name" value="FAD SYNTHASE"/>
    <property type="match status" value="1"/>
</dbReference>
<dbReference type="Pfam" id="PF01467">
    <property type="entry name" value="CTP_transf_like"/>
    <property type="match status" value="1"/>
</dbReference>
<dbReference type="SUPFAM" id="SSF52374">
    <property type="entry name" value="Nucleotidylyl transferase"/>
    <property type="match status" value="1"/>
</dbReference>
<protein>
    <recommendedName>
        <fullName evidence="1">FAD synthase</fullName>
        <ecNumber evidence="1">2.7.7.2</ecNumber>
    </recommendedName>
    <alternativeName>
        <fullName evidence="1">FMN adenylyltransferase</fullName>
    </alternativeName>
    <alternativeName>
        <fullName evidence="1">Flavin adenine dinucleotide synthase</fullName>
    </alternativeName>
</protein>
<gene>
    <name evidence="1" type="primary">ribL</name>
    <name type="ordered locus">Memar_2296</name>
</gene>
<proteinExistence type="inferred from homology"/>
<feature type="chain" id="PRO_0000406261" description="FAD synthase">
    <location>
        <begin position="1"/>
        <end position="149"/>
    </location>
</feature>
<feature type="binding site" evidence="1">
    <location>
        <begin position="9"/>
        <end position="10"/>
    </location>
    <ligand>
        <name>ATP</name>
        <dbReference type="ChEBI" id="CHEBI:30616"/>
    </ligand>
</feature>
<feature type="binding site" evidence="1">
    <location>
        <begin position="14"/>
        <end position="17"/>
    </location>
    <ligand>
        <name>ATP</name>
        <dbReference type="ChEBI" id="CHEBI:30616"/>
    </ligand>
</feature>
<feature type="binding site" evidence="1">
    <location>
        <position position="92"/>
    </location>
    <ligand>
        <name>ATP</name>
        <dbReference type="ChEBI" id="CHEBI:30616"/>
    </ligand>
</feature>
<feature type="binding site" evidence="1">
    <location>
        <position position="119"/>
    </location>
    <ligand>
        <name>ATP</name>
        <dbReference type="ChEBI" id="CHEBI:30616"/>
    </ligand>
</feature>
<accession>A3CXW9</accession>
<organism>
    <name type="scientific">Methanoculleus marisnigri (strain ATCC 35101 / DSM 1498 / JR1)</name>
    <dbReference type="NCBI Taxonomy" id="368407"/>
    <lineage>
        <taxon>Archaea</taxon>
        <taxon>Methanobacteriati</taxon>
        <taxon>Methanobacteriota</taxon>
        <taxon>Stenosarchaea group</taxon>
        <taxon>Methanomicrobia</taxon>
        <taxon>Methanomicrobiales</taxon>
        <taxon>Methanomicrobiaceae</taxon>
        <taxon>Methanoculleus</taxon>
    </lineage>
</organism>
<keyword id="KW-0067">ATP-binding</keyword>
<keyword id="KW-0274">FAD</keyword>
<keyword id="KW-0285">Flavoprotein</keyword>
<keyword id="KW-0288">FMN</keyword>
<keyword id="KW-0547">Nucleotide-binding</keyword>
<keyword id="KW-0548">Nucleotidyltransferase</keyword>
<keyword id="KW-0808">Transferase</keyword>
<reference key="1">
    <citation type="journal article" date="2009" name="Stand. Genomic Sci.">
        <title>Complete genome sequence of Methanoculleus marisnigri Romesser et al. 1981 type strain JR1.</title>
        <authorList>
            <person name="Anderson I.J."/>
            <person name="Sieprawska-Lupa M."/>
            <person name="Lapidus A."/>
            <person name="Nolan M."/>
            <person name="Copeland A."/>
            <person name="Glavina Del Rio T."/>
            <person name="Tice H."/>
            <person name="Dalin E."/>
            <person name="Barry K."/>
            <person name="Saunders E."/>
            <person name="Han C."/>
            <person name="Brettin T."/>
            <person name="Detter J.C."/>
            <person name="Bruce D."/>
            <person name="Mikhailova N."/>
            <person name="Pitluck S."/>
            <person name="Hauser L."/>
            <person name="Land M."/>
            <person name="Lucas S."/>
            <person name="Richardson P."/>
            <person name="Whitman W.B."/>
            <person name="Kyrpides N.C."/>
        </authorList>
    </citation>
    <scope>NUCLEOTIDE SEQUENCE [LARGE SCALE GENOMIC DNA]</scope>
    <source>
        <strain>ATCC 35101 / DSM 1498 / JR1</strain>
    </source>
</reference>
<sequence>MIRVVATGTFDILHPGHLYYLEESRNLGDELSVIVARDANVKHKPRPFLPEDQRLRMIRALKPVDHALLGDLHDMFRPIAEIRPDIITLGFNQHFDEEHLRQKLRERGLDADVVRIPGYPGSLASSSKIIERILNTRGPPDPTGSHGEE</sequence>
<comment type="function">
    <text evidence="1">Catalyzes the transfer of the AMP portion of ATP to flavin mononucleotide (FMN) to produce flavin adenine dinucleotide (FAD) coenzyme.</text>
</comment>
<comment type="catalytic activity">
    <reaction evidence="1">
        <text>FMN + ATP + H(+) = FAD + diphosphate</text>
        <dbReference type="Rhea" id="RHEA:17237"/>
        <dbReference type="ChEBI" id="CHEBI:15378"/>
        <dbReference type="ChEBI" id="CHEBI:30616"/>
        <dbReference type="ChEBI" id="CHEBI:33019"/>
        <dbReference type="ChEBI" id="CHEBI:57692"/>
        <dbReference type="ChEBI" id="CHEBI:58210"/>
        <dbReference type="EC" id="2.7.7.2"/>
    </reaction>
</comment>
<comment type="cofactor">
    <cofactor evidence="1">
        <name>a divalent metal cation</name>
        <dbReference type="ChEBI" id="CHEBI:60240"/>
    </cofactor>
</comment>
<comment type="pathway">
    <text evidence="1">Cofactor biosynthesis; FAD biosynthesis; FAD from FMN: step 1/1.</text>
</comment>
<comment type="subunit">
    <text evidence="1">Homodimer.</text>
</comment>
<comment type="similarity">
    <text evidence="1">Belongs to the archaeal FAD synthase family.</text>
</comment>
<name>RIBL_METMJ</name>
<evidence type="ECO:0000255" key="1">
    <source>
        <dbReference type="HAMAP-Rule" id="MF_02115"/>
    </source>
</evidence>